<accession>A1A968</accession>
<accession>A1A969</accession>
<feature type="signal peptide" evidence="2">
    <location>
        <begin position="1"/>
        <end position="26"/>
    </location>
</feature>
<feature type="chain" id="PRO_0000279975" description="Glutathione-binding protein GsiB">
    <location>
        <begin position="27"/>
        <end position="512"/>
    </location>
</feature>
<sequence length="512" mass="56428">MARAVHRSGLVALGIATALMASCAFAAKEVVVAVGSNFTTLDPYDANDTLSQAVAKSFYQGLFGLDKEMKLKNVLAESYTVSDDGLTYTVKLREGIKFQDGTDFNAAAVKANLDRASDPANHLKRYNLYKNIAKTEAIDPTTVKITLKQPFSAFINILAHPATAMISPAALEKYGKEIGFHPVGTGPYELDTWNQTDFVKVKKFAGYWQPGLPKLDSITWRPVADNNTRAAMLQTGEAQFAFPIPYEQAALLEKNKNIELMASPSIMQRYISMNVTQKPFDNPKVREALNYAINRPALVKVAFAGYATPATGVVPPSIAYAQSYKPWPYDPVKARELLKEAGYPNGFSTTLWSSHNHSTAQKVLQFTQQQLAQVGIKAQVTAMDAGQRAAEVEGKGQKESGVRMFYTGWSASTGEADWALSPLFASQNWPPTLFNTAFYSNKQVDDFLAQALKTNDPAEKTRLYKAAQDIIWQESPWIPLVVEKLVSAHSKNLTGFWIMPDTGFSFEDADLQ</sequence>
<name>GSIB_ECOK1</name>
<evidence type="ECO:0000250" key="1">
    <source>
        <dbReference type="UniProtKB" id="P75797"/>
    </source>
</evidence>
<evidence type="ECO:0000255" key="2"/>
<evidence type="ECO:0000305" key="3"/>
<dbReference type="EMBL" id="CP000468">
    <property type="protein sequence ID" value="ABJ00208.1"/>
    <property type="status" value="ALT_SEQ"/>
    <property type="molecule type" value="Genomic_DNA"/>
</dbReference>
<dbReference type="EMBL" id="CP000468">
    <property type="protein sequence ID" value="ABJ00209.1"/>
    <property type="status" value="ALT_FRAME"/>
    <property type="molecule type" value="Genomic_DNA"/>
</dbReference>
<dbReference type="RefSeq" id="WP_000090180.1">
    <property type="nucleotide sequence ID" value="NZ_CADILS010000017.1"/>
</dbReference>
<dbReference type="SMR" id="A1A968"/>
<dbReference type="KEGG" id="ecv:APECO1_1263"/>
<dbReference type="KEGG" id="ecv:APECO1_12632"/>
<dbReference type="HOGENOM" id="CLU_743432_0_0_6"/>
<dbReference type="Proteomes" id="UP000008216">
    <property type="component" value="Chromosome"/>
</dbReference>
<dbReference type="GO" id="GO:0043190">
    <property type="term" value="C:ATP-binding cassette (ABC) transporter complex"/>
    <property type="evidence" value="ECO:0007669"/>
    <property type="project" value="InterPro"/>
</dbReference>
<dbReference type="GO" id="GO:0030288">
    <property type="term" value="C:outer membrane-bounded periplasmic space"/>
    <property type="evidence" value="ECO:0007669"/>
    <property type="project" value="TreeGrafter"/>
</dbReference>
<dbReference type="GO" id="GO:1904680">
    <property type="term" value="F:peptide transmembrane transporter activity"/>
    <property type="evidence" value="ECO:0007669"/>
    <property type="project" value="TreeGrafter"/>
</dbReference>
<dbReference type="GO" id="GO:0042938">
    <property type="term" value="P:dipeptide transport"/>
    <property type="evidence" value="ECO:0007669"/>
    <property type="project" value="TreeGrafter"/>
</dbReference>
<dbReference type="CDD" id="cd08499">
    <property type="entry name" value="PBP2_Ylib_like"/>
    <property type="match status" value="1"/>
</dbReference>
<dbReference type="FunFam" id="3.10.105.10:FF:000003">
    <property type="entry name" value="Glutathione ABC transporter substrate-binding protein GsiB"/>
    <property type="match status" value="1"/>
</dbReference>
<dbReference type="FunFam" id="3.40.190.10:FF:000094">
    <property type="entry name" value="Glutathione ABC transporter substrate-binding protein GsiB"/>
    <property type="match status" value="1"/>
</dbReference>
<dbReference type="FunFam" id="3.90.76.10:FF:000003">
    <property type="entry name" value="Glutathione ABC transporter substrate-binding protein GsiB"/>
    <property type="match status" value="1"/>
</dbReference>
<dbReference type="Gene3D" id="3.90.76.10">
    <property type="entry name" value="Dipeptide-binding Protein, Domain 1"/>
    <property type="match status" value="1"/>
</dbReference>
<dbReference type="Gene3D" id="3.10.105.10">
    <property type="entry name" value="Dipeptide-binding Protein, Domain 3"/>
    <property type="match status" value="1"/>
</dbReference>
<dbReference type="Gene3D" id="3.40.190.10">
    <property type="entry name" value="Periplasmic binding protein-like II"/>
    <property type="match status" value="1"/>
</dbReference>
<dbReference type="InterPro" id="IPR030678">
    <property type="entry name" value="Peptide/Ni-bd"/>
</dbReference>
<dbReference type="InterPro" id="IPR039424">
    <property type="entry name" value="SBP_5"/>
</dbReference>
<dbReference type="InterPro" id="IPR023765">
    <property type="entry name" value="SBP_5_CS"/>
</dbReference>
<dbReference type="InterPro" id="IPR000914">
    <property type="entry name" value="SBP_5_dom"/>
</dbReference>
<dbReference type="NCBIfam" id="NF011942">
    <property type="entry name" value="PRK15413.1"/>
    <property type="match status" value="1"/>
</dbReference>
<dbReference type="PANTHER" id="PTHR30290:SF32">
    <property type="entry name" value="GLUTATHIONE-BINDING PROTEIN GSIB"/>
    <property type="match status" value="1"/>
</dbReference>
<dbReference type="PANTHER" id="PTHR30290">
    <property type="entry name" value="PERIPLASMIC BINDING COMPONENT OF ABC TRANSPORTER"/>
    <property type="match status" value="1"/>
</dbReference>
<dbReference type="Pfam" id="PF00496">
    <property type="entry name" value="SBP_bac_5"/>
    <property type="match status" value="1"/>
</dbReference>
<dbReference type="PIRSF" id="PIRSF002741">
    <property type="entry name" value="MppA"/>
    <property type="match status" value="1"/>
</dbReference>
<dbReference type="SUPFAM" id="SSF53850">
    <property type="entry name" value="Periplasmic binding protein-like II"/>
    <property type="match status" value="1"/>
</dbReference>
<dbReference type="PROSITE" id="PS01040">
    <property type="entry name" value="SBP_BACTERIAL_5"/>
    <property type="match status" value="1"/>
</dbReference>
<reference key="1">
    <citation type="journal article" date="2007" name="J. Bacteriol.">
        <title>The genome sequence of avian pathogenic Escherichia coli strain O1:K1:H7 shares strong similarities with human extraintestinal pathogenic E. coli genomes.</title>
        <authorList>
            <person name="Johnson T.J."/>
            <person name="Kariyawasam S."/>
            <person name="Wannemuehler Y."/>
            <person name="Mangiamele P."/>
            <person name="Johnson S.J."/>
            <person name="Doetkott C."/>
            <person name="Skyberg J.A."/>
            <person name="Lynne A.M."/>
            <person name="Johnson J.R."/>
            <person name="Nolan L.K."/>
        </authorList>
    </citation>
    <scope>NUCLEOTIDE SEQUENCE [LARGE SCALE GENOMIC DNA]</scope>
</reference>
<gene>
    <name evidence="1" type="primary">gsiB</name>
    <name type="ordered locus">Ecok1_07140/Ecok1_07150</name>
    <name type="ORF">APECO1_12632/APECO1_1263</name>
</gene>
<organism>
    <name type="scientific">Escherichia coli O1:K1 / APEC</name>
    <dbReference type="NCBI Taxonomy" id="405955"/>
    <lineage>
        <taxon>Bacteria</taxon>
        <taxon>Pseudomonadati</taxon>
        <taxon>Pseudomonadota</taxon>
        <taxon>Gammaproteobacteria</taxon>
        <taxon>Enterobacterales</taxon>
        <taxon>Enterobacteriaceae</taxon>
        <taxon>Escherichia</taxon>
    </lineage>
</organism>
<keyword id="KW-0574">Periplasm</keyword>
<keyword id="KW-1185">Reference proteome</keyword>
<keyword id="KW-0732">Signal</keyword>
<keyword id="KW-0813">Transport</keyword>
<proteinExistence type="inferred from homology"/>
<comment type="function">
    <text evidence="1">Part of the ABC transporter complex GsiABCD involved in glutathione import. Binds glutathione.</text>
</comment>
<comment type="subunit">
    <text evidence="1">The complex is composed of two ATP-binding proteins (GsiA), two transmembrane proteins (GsiC and GsiD) and a solute-binding protein (GsiB).</text>
</comment>
<comment type="subcellular location">
    <subcellularLocation>
        <location evidence="1">Periplasm</location>
    </subcellularLocation>
</comment>
<comment type="similarity">
    <text evidence="3">Belongs to the bacterial solute-binding protein 5 family.</text>
</comment>
<comment type="sequence caution" evidence="3">
    <conflict type="frameshift">
        <sequence resource="EMBL-CDS" id="ABJ00208"/>
    </conflict>
    <text>Produces two separate ORFs.</text>
</comment>
<comment type="sequence caution" evidence="3">
    <conflict type="frameshift">
        <sequence resource="EMBL-CDS" id="ABJ00209"/>
    </conflict>
    <text>Produces two separate ORFs.</text>
</comment>
<protein>
    <recommendedName>
        <fullName evidence="1">Glutathione-binding protein GsiB</fullName>
    </recommendedName>
</protein>